<proteinExistence type="evidence at transcript level"/>
<feature type="chain" id="PRO_0000393248" description="Probable methyltransferase PMT8">
    <location>
        <begin position="1"/>
        <end position="623"/>
    </location>
</feature>
<feature type="topological domain" description="Cytoplasmic" evidence="1">
    <location>
        <begin position="1"/>
        <end position="13"/>
    </location>
</feature>
<feature type="transmembrane region" description="Helical; Signal-anchor for type II membrane protein" evidence="1">
    <location>
        <begin position="14"/>
        <end position="34"/>
    </location>
</feature>
<feature type="topological domain" description="Lumenal" evidence="1">
    <location>
        <begin position="35"/>
        <end position="623"/>
    </location>
</feature>
<feature type="glycosylation site" description="N-linked (GlcNAc...) asparagine" evidence="1">
    <location>
        <position position="204"/>
    </location>
</feature>
<feature type="glycosylation site" description="N-linked (GlcNAc...) asparagine" evidence="1">
    <location>
        <position position="350"/>
    </location>
</feature>
<feature type="glycosylation site" description="N-linked (GlcNAc...) asparagine" evidence="1">
    <location>
        <position position="588"/>
    </location>
</feature>
<feature type="sequence conflict" description="In Ref. 3; AAM10022/AAK62456." evidence="2" ref="3">
    <original>Y</original>
    <variation>C</variation>
    <location>
        <position position="190"/>
    </location>
</feature>
<comment type="subcellular location">
    <subcellularLocation>
        <location evidence="2">Golgi apparatus membrane</location>
        <topology evidence="2">Single-pass type II membrane protein</topology>
    </subcellularLocation>
</comment>
<comment type="similarity">
    <text evidence="2">Belongs to the methyltransferase superfamily.</text>
</comment>
<comment type="sequence caution" evidence="2">
    <conflict type="erroneous gene model prediction">
        <sequence resource="EMBL-CDS" id="AAB70432"/>
    </conflict>
</comment>
<comment type="sequence caution" evidence="2">
    <conflict type="erroneous initiation">
        <sequence resource="EMBL-CDS" id="AAM61029"/>
    </conflict>
    <text>Truncated N-terminus.</text>
</comment>
<dbReference type="EC" id="2.1.1.-"/>
<dbReference type="EMBL" id="AC000104">
    <property type="protein sequence ID" value="AAB70432.1"/>
    <property type="status" value="ALT_SEQ"/>
    <property type="molecule type" value="Genomic_DNA"/>
</dbReference>
<dbReference type="EMBL" id="CP002684">
    <property type="protein sequence ID" value="AEE27696.1"/>
    <property type="molecule type" value="Genomic_DNA"/>
</dbReference>
<dbReference type="EMBL" id="CP002684">
    <property type="protein sequence ID" value="AEE27697.1"/>
    <property type="molecule type" value="Genomic_DNA"/>
</dbReference>
<dbReference type="EMBL" id="CP002684">
    <property type="protein sequence ID" value="ANM58680.1"/>
    <property type="molecule type" value="Genomic_DNA"/>
</dbReference>
<dbReference type="EMBL" id="AY054530">
    <property type="protein sequence ID" value="AAK96721.1"/>
    <property type="molecule type" value="mRNA"/>
</dbReference>
<dbReference type="EMBL" id="AY064624">
    <property type="protein sequence ID" value="AAL47337.1"/>
    <property type="molecule type" value="mRNA"/>
</dbReference>
<dbReference type="EMBL" id="AF387011">
    <property type="protein sequence ID" value="AAK62456.1"/>
    <property type="molecule type" value="mRNA"/>
</dbReference>
<dbReference type="EMBL" id="AY081460">
    <property type="protein sequence ID" value="AAM10022.1"/>
    <property type="molecule type" value="mRNA"/>
</dbReference>
<dbReference type="EMBL" id="AY084457">
    <property type="protein sequence ID" value="AAM61029.1"/>
    <property type="status" value="ALT_INIT"/>
    <property type="molecule type" value="mRNA"/>
</dbReference>
<dbReference type="EMBL" id="AK222007">
    <property type="protein sequence ID" value="BAD94636.1"/>
    <property type="molecule type" value="mRNA"/>
</dbReference>
<dbReference type="PIR" id="D86176">
    <property type="entry name" value="D86176"/>
</dbReference>
<dbReference type="RefSeq" id="NP_001117225.1">
    <property type="nucleotide sequence ID" value="NM_001123753.2"/>
</dbReference>
<dbReference type="RefSeq" id="NP_001321096.1">
    <property type="nucleotide sequence ID" value="NM_001331478.1"/>
</dbReference>
<dbReference type="RefSeq" id="NP_563706.1">
    <property type="nucleotide sequence ID" value="NM_100323.7"/>
</dbReference>
<dbReference type="SMR" id="Q940J9"/>
<dbReference type="BioGRID" id="24757">
    <property type="interactions" value="3"/>
</dbReference>
<dbReference type="FunCoup" id="Q940J9">
    <property type="interactions" value="535"/>
</dbReference>
<dbReference type="IntAct" id="Q940J9">
    <property type="interactions" value="1"/>
</dbReference>
<dbReference type="STRING" id="3702.Q940J9"/>
<dbReference type="GlyGen" id="Q940J9">
    <property type="glycosylation" value="3 sites"/>
</dbReference>
<dbReference type="PaxDb" id="3702-AT1G04430.1"/>
<dbReference type="ProteomicsDB" id="236649"/>
<dbReference type="EnsemblPlants" id="AT1G04430.1">
    <property type="protein sequence ID" value="AT1G04430.1"/>
    <property type="gene ID" value="AT1G04430"/>
</dbReference>
<dbReference type="EnsemblPlants" id="AT1G04430.2">
    <property type="protein sequence ID" value="AT1G04430.2"/>
    <property type="gene ID" value="AT1G04430"/>
</dbReference>
<dbReference type="EnsemblPlants" id="AT1G04430.3">
    <property type="protein sequence ID" value="AT1G04430.3"/>
    <property type="gene ID" value="AT1G04430"/>
</dbReference>
<dbReference type="GeneID" id="839522"/>
<dbReference type="Gramene" id="AT1G04430.1">
    <property type="protein sequence ID" value="AT1G04430.1"/>
    <property type="gene ID" value="AT1G04430"/>
</dbReference>
<dbReference type="Gramene" id="AT1G04430.2">
    <property type="protein sequence ID" value="AT1G04430.2"/>
    <property type="gene ID" value="AT1G04430"/>
</dbReference>
<dbReference type="Gramene" id="AT1G04430.3">
    <property type="protein sequence ID" value="AT1G04430.3"/>
    <property type="gene ID" value="AT1G04430"/>
</dbReference>
<dbReference type="KEGG" id="ath:AT1G04430"/>
<dbReference type="Araport" id="AT1G04430"/>
<dbReference type="TAIR" id="AT1G04430"/>
<dbReference type="eggNOG" id="ENOG502QTWS">
    <property type="taxonomic scope" value="Eukaryota"/>
</dbReference>
<dbReference type="HOGENOM" id="CLU_010485_2_2_1"/>
<dbReference type="InParanoid" id="Q940J9"/>
<dbReference type="OMA" id="VEHYWNI"/>
<dbReference type="OrthoDB" id="2013972at2759"/>
<dbReference type="PhylomeDB" id="Q940J9"/>
<dbReference type="CD-CODE" id="4299E36E">
    <property type="entry name" value="Nucleolus"/>
</dbReference>
<dbReference type="PRO" id="PR:Q940J9"/>
<dbReference type="Proteomes" id="UP000006548">
    <property type="component" value="Chromosome 1"/>
</dbReference>
<dbReference type="ExpressionAtlas" id="Q940J9">
    <property type="expression patterns" value="baseline and differential"/>
</dbReference>
<dbReference type="GO" id="GO:0005768">
    <property type="term" value="C:endosome"/>
    <property type="evidence" value="ECO:0007005"/>
    <property type="project" value="TAIR"/>
</dbReference>
<dbReference type="GO" id="GO:0005794">
    <property type="term" value="C:Golgi apparatus"/>
    <property type="evidence" value="ECO:0007005"/>
    <property type="project" value="TAIR"/>
</dbReference>
<dbReference type="GO" id="GO:0000139">
    <property type="term" value="C:Golgi membrane"/>
    <property type="evidence" value="ECO:0007669"/>
    <property type="project" value="UniProtKB-SubCell"/>
</dbReference>
<dbReference type="GO" id="GO:0000138">
    <property type="term" value="C:Golgi trans cisterna"/>
    <property type="evidence" value="ECO:0007005"/>
    <property type="project" value="TAIR"/>
</dbReference>
<dbReference type="GO" id="GO:0000325">
    <property type="term" value="C:plant-type vacuole"/>
    <property type="evidence" value="ECO:0007005"/>
    <property type="project" value="TAIR"/>
</dbReference>
<dbReference type="GO" id="GO:0005802">
    <property type="term" value="C:trans-Golgi network"/>
    <property type="evidence" value="ECO:0007005"/>
    <property type="project" value="TAIR"/>
</dbReference>
<dbReference type="GO" id="GO:0008168">
    <property type="term" value="F:methyltransferase activity"/>
    <property type="evidence" value="ECO:0007669"/>
    <property type="project" value="UniProtKB-KW"/>
</dbReference>
<dbReference type="GO" id="GO:0032259">
    <property type="term" value="P:methylation"/>
    <property type="evidence" value="ECO:0007669"/>
    <property type="project" value="UniProtKB-KW"/>
</dbReference>
<dbReference type="FunFam" id="3.40.50.150:FF:000043">
    <property type="entry name" value="probable methyltransferase PMT3"/>
    <property type="match status" value="1"/>
</dbReference>
<dbReference type="Gene3D" id="3.40.50.150">
    <property type="entry name" value="Vaccinia Virus protein VP39"/>
    <property type="match status" value="1"/>
</dbReference>
<dbReference type="InterPro" id="IPR004159">
    <property type="entry name" value="Put_SAM_MeTrfase"/>
</dbReference>
<dbReference type="InterPro" id="IPR029063">
    <property type="entry name" value="SAM-dependent_MTases_sf"/>
</dbReference>
<dbReference type="PANTHER" id="PTHR10108:SF1120">
    <property type="entry name" value="METHYLTRANSFERASE PMT8-RELATED"/>
    <property type="match status" value="1"/>
</dbReference>
<dbReference type="PANTHER" id="PTHR10108">
    <property type="entry name" value="SAM-DEPENDENT METHYLTRANSFERASE"/>
    <property type="match status" value="1"/>
</dbReference>
<dbReference type="Pfam" id="PF03141">
    <property type="entry name" value="Methyltransf_29"/>
    <property type="match status" value="1"/>
</dbReference>
<dbReference type="SUPFAM" id="SSF53335">
    <property type="entry name" value="S-adenosyl-L-methionine-dependent methyltransferases"/>
    <property type="match status" value="2"/>
</dbReference>
<protein>
    <recommendedName>
        <fullName>Probable methyltransferase PMT8</fullName>
        <ecNumber>2.1.1.-</ecNumber>
    </recommendedName>
</protein>
<sequence>MMRGRSDGGLKKRLIASVCVVALFVCFLFMYYGSSSQGASALEYGRSLRKLGSSYLSGDDDNGDTKQDDSVANAEDSLVVAKSFPVCDDRHSEIIPCLDRNFIYQMRLKLDLSLMEHYERHCPPPERRFNCLIPPPSGYKVPIKWPKSRDEVWKANIPHTHLAKEKSDQNWMVEKGEKISFPGGGTHFHYGADKYIASIANMLNFSNDVLNDEGRLRTVLDVGCGVASFGAYLLASDIMTMSLAPNDVHQNQIQFALERGIPAYLGVLGTKRLPYPSRSFEFAHCSRCRIDWLQRDGLLLLELDRVLRPGGYFAYSSPEAYAQDEENLKIWKEMSALVERMCWRIAVKRNQTVVWQKPLSNDCYLEREPGTQPPLCRSDADPDAVAGVSMEACITPYSKHDHKTKGSGLAPWPARLTSSPPRLADFGYSTDMFEKDTELWKQQVDSYWNLMSSKVKSNTVRNIMDMKAHMGSFAAALKDKDVWVMNVVSPDGPNTLKLIYDRGLIGTNHNWCEAFSTYPRTYDLLHAWSIFSDIKSKGCSAEDLLIEMDRILRPTGFVIIRDKQSVVESIKKYLQALHWETVASEKVNTSSELDQDSEDGENNVVFIVQKKLWLTSESLRDSE</sequence>
<accession>Q940J9</accession>
<accession>P93817</accession>
<accession>Q56WM9</accession>
<accession>Q8LG52</accession>
<accession>Q94EZ3</accession>
<name>PMT8_ARATH</name>
<evidence type="ECO:0000255" key="1"/>
<evidence type="ECO:0000305" key="2"/>
<organism>
    <name type="scientific">Arabidopsis thaliana</name>
    <name type="common">Mouse-ear cress</name>
    <dbReference type="NCBI Taxonomy" id="3702"/>
    <lineage>
        <taxon>Eukaryota</taxon>
        <taxon>Viridiplantae</taxon>
        <taxon>Streptophyta</taxon>
        <taxon>Embryophyta</taxon>
        <taxon>Tracheophyta</taxon>
        <taxon>Spermatophyta</taxon>
        <taxon>Magnoliopsida</taxon>
        <taxon>eudicotyledons</taxon>
        <taxon>Gunneridae</taxon>
        <taxon>Pentapetalae</taxon>
        <taxon>rosids</taxon>
        <taxon>malvids</taxon>
        <taxon>Brassicales</taxon>
        <taxon>Brassicaceae</taxon>
        <taxon>Camelineae</taxon>
        <taxon>Arabidopsis</taxon>
    </lineage>
</organism>
<keyword id="KW-0325">Glycoprotein</keyword>
<keyword id="KW-0333">Golgi apparatus</keyword>
<keyword id="KW-0472">Membrane</keyword>
<keyword id="KW-0489">Methyltransferase</keyword>
<keyword id="KW-1185">Reference proteome</keyword>
<keyword id="KW-0735">Signal-anchor</keyword>
<keyword id="KW-0808">Transferase</keyword>
<keyword id="KW-0812">Transmembrane</keyword>
<keyword id="KW-1133">Transmembrane helix</keyword>
<reference key="1">
    <citation type="journal article" date="2000" name="Nature">
        <title>Sequence and analysis of chromosome 1 of the plant Arabidopsis thaliana.</title>
        <authorList>
            <person name="Theologis A."/>
            <person name="Ecker J.R."/>
            <person name="Palm C.J."/>
            <person name="Federspiel N.A."/>
            <person name="Kaul S."/>
            <person name="White O."/>
            <person name="Alonso J."/>
            <person name="Altafi H."/>
            <person name="Araujo R."/>
            <person name="Bowman C.L."/>
            <person name="Brooks S.Y."/>
            <person name="Buehler E."/>
            <person name="Chan A."/>
            <person name="Chao Q."/>
            <person name="Chen H."/>
            <person name="Cheuk R.F."/>
            <person name="Chin C.W."/>
            <person name="Chung M.K."/>
            <person name="Conn L."/>
            <person name="Conway A.B."/>
            <person name="Conway A.R."/>
            <person name="Creasy T.H."/>
            <person name="Dewar K."/>
            <person name="Dunn P."/>
            <person name="Etgu P."/>
            <person name="Feldblyum T.V."/>
            <person name="Feng J.-D."/>
            <person name="Fong B."/>
            <person name="Fujii C.Y."/>
            <person name="Gill J.E."/>
            <person name="Goldsmith A.D."/>
            <person name="Haas B."/>
            <person name="Hansen N.F."/>
            <person name="Hughes B."/>
            <person name="Huizar L."/>
            <person name="Hunter J.L."/>
            <person name="Jenkins J."/>
            <person name="Johnson-Hopson C."/>
            <person name="Khan S."/>
            <person name="Khaykin E."/>
            <person name="Kim C.J."/>
            <person name="Koo H.L."/>
            <person name="Kremenetskaia I."/>
            <person name="Kurtz D.B."/>
            <person name="Kwan A."/>
            <person name="Lam B."/>
            <person name="Langin-Hooper S."/>
            <person name="Lee A."/>
            <person name="Lee J.M."/>
            <person name="Lenz C.A."/>
            <person name="Li J.H."/>
            <person name="Li Y.-P."/>
            <person name="Lin X."/>
            <person name="Liu S.X."/>
            <person name="Liu Z.A."/>
            <person name="Luros J.S."/>
            <person name="Maiti R."/>
            <person name="Marziali A."/>
            <person name="Militscher J."/>
            <person name="Miranda M."/>
            <person name="Nguyen M."/>
            <person name="Nierman W.C."/>
            <person name="Osborne B.I."/>
            <person name="Pai G."/>
            <person name="Peterson J."/>
            <person name="Pham P.K."/>
            <person name="Rizzo M."/>
            <person name="Rooney T."/>
            <person name="Rowley D."/>
            <person name="Sakano H."/>
            <person name="Salzberg S.L."/>
            <person name="Schwartz J.R."/>
            <person name="Shinn P."/>
            <person name="Southwick A.M."/>
            <person name="Sun H."/>
            <person name="Tallon L.J."/>
            <person name="Tambunga G."/>
            <person name="Toriumi M.J."/>
            <person name="Town C.D."/>
            <person name="Utterback T."/>
            <person name="Van Aken S."/>
            <person name="Vaysberg M."/>
            <person name="Vysotskaia V.S."/>
            <person name="Walker M."/>
            <person name="Wu D."/>
            <person name="Yu G."/>
            <person name="Fraser C.M."/>
            <person name="Venter J.C."/>
            <person name="Davis R.W."/>
        </authorList>
    </citation>
    <scope>NUCLEOTIDE SEQUENCE [LARGE SCALE GENOMIC DNA]</scope>
    <source>
        <strain>cv. Columbia</strain>
    </source>
</reference>
<reference key="2">
    <citation type="journal article" date="2017" name="Plant J.">
        <title>Araport11: a complete reannotation of the Arabidopsis thaliana reference genome.</title>
        <authorList>
            <person name="Cheng C.Y."/>
            <person name="Krishnakumar V."/>
            <person name="Chan A.P."/>
            <person name="Thibaud-Nissen F."/>
            <person name="Schobel S."/>
            <person name="Town C.D."/>
        </authorList>
    </citation>
    <scope>GENOME REANNOTATION</scope>
    <source>
        <strain>cv. Columbia</strain>
    </source>
</reference>
<reference key="3">
    <citation type="journal article" date="2003" name="Science">
        <title>Empirical analysis of transcriptional activity in the Arabidopsis genome.</title>
        <authorList>
            <person name="Yamada K."/>
            <person name="Lim J."/>
            <person name="Dale J.M."/>
            <person name="Chen H."/>
            <person name="Shinn P."/>
            <person name="Palm C.J."/>
            <person name="Southwick A.M."/>
            <person name="Wu H.C."/>
            <person name="Kim C.J."/>
            <person name="Nguyen M."/>
            <person name="Pham P.K."/>
            <person name="Cheuk R.F."/>
            <person name="Karlin-Newmann G."/>
            <person name="Liu S.X."/>
            <person name="Lam B."/>
            <person name="Sakano H."/>
            <person name="Wu T."/>
            <person name="Yu G."/>
            <person name="Miranda M."/>
            <person name="Quach H.L."/>
            <person name="Tripp M."/>
            <person name="Chang C.H."/>
            <person name="Lee J.M."/>
            <person name="Toriumi M.J."/>
            <person name="Chan M.M."/>
            <person name="Tang C.C."/>
            <person name="Onodera C.S."/>
            <person name="Deng J.M."/>
            <person name="Akiyama K."/>
            <person name="Ansari Y."/>
            <person name="Arakawa T."/>
            <person name="Banh J."/>
            <person name="Banno F."/>
            <person name="Bowser L."/>
            <person name="Brooks S.Y."/>
            <person name="Carninci P."/>
            <person name="Chao Q."/>
            <person name="Choy N."/>
            <person name="Enju A."/>
            <person name="Goldsmith A.D."/>
            <person name="Gurjal M."/>
            <person name="Hansen N.F."/>
            <person name="Hayashizaki Y."/>
            <person name="Johnson-Hopson C."/>
            <person name="Hsuan V.W."/>
            <person name="Iida K."/>
            <person name="Karnes M."/>
            <person name="Khan S."/>
            <person name="Koesema E."/>
            <person name="Ishida J."/>
            <person name="Jiang P.X."/>
            <person name="Jones T."/>
            <person name="Kawai J."/>
            <person name="Kamiya A."/>
            <person name="Meyers C."/>
            <person name="Nakajima M."/>
            <person name="Narusaka M."/>
            <person name="Seki M."/>
            <person name="Sakurai T."/>
            <person name="Satou M."/>
            <person name="Tamse R."/>
            <person name="Vaysberg M."/>
            <person name="Wallender E.K."/>
            <person name="Wong C."/>
            <person name="Yamamura Y."/>
            <person name="Yuan S."/>
            <person name="Shinozaki K."/>
            <person name="Davis R.W."/>
            <person name="Theologis A."/>
            <person name="Ecker J.R."/>
        </authorList>
    </citation>
    <scope>NUCLEOTIDE SEQUENCE [LARGE SCALE MRNA]</scope>
    <source>
        <strain>cv. Columbia</strain>
    </source>
</reference>
<reference key="4">
    <citation type="submission" date="2002-03" db="EMBL/GenBank/DDBJ databases">
        <title>Full-length cDNA from Arabidopsis thaliana.</title>
        <authorList>
            <person name="Brover V.V."/>
            <person name="Troukhan M.E."/>
            <person name="Alexandrov N.A."/>
            <person name="Lu Y.-P."/>
            <person name="Flavell R.B."/>
            <person name="Feldmann K.A."/>
        </authorList>
    </citation>
    <scope>NUCLEOTIDE SEQUENCE [LARGE SCALE MRNA]</scope>
</reference>
<reference key="5">
    <citation type="submission" date="2005-03" db="EMBL/GenBank/DDBJ databases">
        <title>Large-scale analysis of RIKEN Arabidopsis full-length (RAFL) cDNAs.</title>
        <authorList>
            <person name="Totoki Y."/>
            <person name="Seki M."/>
            <person name="Ishida J."/>
            <person name="Nakajima M."/>
            <person name="Enju A."/>
            <person name="Kamiya A."/>
            <person name="Narusaka M."/>
            <person name="Shin-i T."/>
            <person name="Nakagawa M."/>
            <person name="Sakamoto N."/>
            <person name="Oishi K."/>
            <person name="Kohara Y."/>
            <person name="Kobayashi M."/>
            <person name="Toyoda A."/>
            <person name="Sakaki Y."/>
            <person name="Sakurai T."/>
            <person name="Iida K."/>
            <person name="Akiyama K."/>
            <person name="Satou M."/>
            <person name="Toyoda T."/>
            <person name="Konagaya A."/>
            <person name="Carninci P."/>
            <person name="Kawai J."/>
            <person name="Hayashizaki Y."/>
            <person name="Shinozaki K."/>
        </authorList>
    </citation>
    <scope>NUCLEOTIDE SEQUENCE [LARGE SCALE MRNA] OF 381-623</scope>
    <source>
        <strain>cv. Columbia</strain>
    </source>
</reference>
<reference key="6">
    <citation type="journal article" date="2007" name="Plant J.">
        <title>The TUMOROUS SHOOT DEVELOPMENT2 gene of Arabidopsis encoding a putative methyltransferase is required for cell adhesion and co-ordinated plant development.</title>
        <authorList>
            <person name="Krupkova E."/>
            <person name="Immerzeel P."/>
            <person name="Pauly M."/>
            <person name="Schmulling T."/>
        </authorList>
    </citation>
    <scope>GENE FAMILY</scope>
</reference>
<gene>
    <name type="ordered locus">At1g04430</name>
    <name type="ORF">F19P19.11</name>
</gene>